<evidence type="ECO:0000255" key="1">
    <source>
        <dbReference type="HAMAP-Rule" id="MF_01953"/>
    </source>
</evidence>
<name>URE1_LARHH</name>
<proteinExistence type="inferred from homology"/>
<sequence length="572" mass="60387">MSTISRQQYADLFGPTTGDKIRLGDTSLFVSIEKDLRTYGDEAVYGGGKTLRDGMGMDNELTSIGGAPDLLITNVTIIDAVLGVIKADVGIKDGRICGIGKAGNPSTMPGVTPSLAVGPATDAISGEHLILTAGGIDAHVHMISPQQAEAALSNGITTLFGGGLGPTDGTNGTTITSGTWNLEMMMRSFDALPINVGLLGKGNSSGMKPIVEQIEAGAAGLKVHEDWGSTVGAIRTSLEAADEYDVQVAIHTDTLNEGGFVENTIAAFDGRTIHTYHTEGAGGGHAPDIIRVASYSNVLPSSTNPTLPFGINSQAELFDMTMVCHNLNPKVATDVAFAESRVRPETIAAENVLHDMGVISIISSDSQAMGRVGESWARSIQTADAMKQGRGKLPEDNADDDNFRVLRYVAKITINPAIAQGISHLVGSVEVGKFADLVLWEPAFFGAKPKFVIKGGMIAWSLMGDPNASLPTPQPVIYRPMYGAFASALHKTCITFASQAGVANGIAERYGLQRLVEPVRNTRAITKNDMVRNAHTPHIEVNPETFAVMVDGVHATVAPIRSVSLGQLYFFS</sequence>
<dbReference type="EC" id="3.5.1.5" evidence="1"/>
<dbReference type="EMBL" id="CP001154">
    <property type="protein sequence ID" value="ACO74029.1"/>
    <property type="molecule type" value="Genomic_DNA"/>
</dbReference>
<dbReference type="RefSeq" id="WP_012696519.1">
    <property type="nucleotide sequence ID" value="NC_012559.1"/>
</dbReference>
<dbReference type="SMR" id="C1D5Z8"/>
<dbReference type="STRING" id="557598.LHK_01037"/>
<dbReference type="KEGG" id="lhk:LHK_01037"/>
<dbReference type="eggNOG" id="COG0804">
    <property type="taxonomic scope" value="Bacteria"/>
</dbReference>
<dbReference type="HOGENOM" id="CLU_000980_0_0_4"/>
<dbReference type="UniPathway" id="UPA00258">
    <property type="reaction ID" value="UER00370"/>
</dbReference>
<dbReference type="Proteomes" id="UP000002010">
    <property type="component" value="Chromosome"/>
</dbReference>
<dbReference type="GO" id="GO:0005737">
    <property type="term" value="C:cytoplasm"/>
    <property type="evidence" value="ECO:0007669"/>
    <property type="project" value="UniProtKB-SubCell"/>
</dbReference>
<dbReference type="GO" id="GO:0016151">
    <property type="term" value="F:nickel cation binding"/>
    <property type="evidence" value="ECO:0007669"/>
    <property type="project" value="UniProtKB-UniRule"/>
</dbReference>
<dbReference type="GO" id="GO:0009039">
    <property type="term" value="F:urease activity"/>
    <property type="evidence" value="ECO:0007669"/>
    <property type="project" value="UniProtKB-UniRule"/>
</dbReference>
<dbReference type="GO" id="GO:0043419">
    <property type="term" value="P:urea catabolic process"/>
    <property type="evidence" value="ECO:0007669"/>
    <property type="project" value="UniProtKB-UniRule"/>
</dbReference>
<dbReference type="CDD" id="cd00375">
    <property type="entry name" value="Urease_alpha"/>
    <property type="match status" value="1"/>
</dbReference>
<dbReference type="Gene3D" id="3.20.20.140">
    <property type="entry name" value="Metal-dependent hydrolases"/>
    <property type="match status" value="1"/>
</dbReference>
<dbReference type="Gene3D" id="2.30.40.10">
    <property type="entry name" value="Urease, subunit C, domain 1"/>
    <property type="match status" value="1"/>
</dbReference>
<dbReference type="HAMAP" id="MF_01953">
    <property type="entry name" value="Urease_alpha"/>
    <property type="match status" value="1"/>
</dbReference>
<dbReference type="InterPro" id="IPR006680">
    <property type="entry name" value="Amidohydro-rel"/>
</dbReference>
<dbReference type="InterPro" id="IPR011059">
    <property type="entry name" value="Metal-dep_hydrolase_composite"/>
</dbReference>
<dbReference type="InterPro" id="IPR032466">
    <property type="entry name" value="Metal_Hydrolase"/>
</dbReference>
<dbReference type="InterPro" id="IPR011612">
    <property type="entry name" value="Urease_alpha_N_dom"/>
</dbReference>
<dbReference type="InterPro" id="IPR050112">
    <property type="entry name" value="Urease_alpha_subunit"/>
</dbReference>
<dbReference type="InterPro" id="IPR017950">
    <property type="entry name" value="Urease_AS"/>
</dbReference>
<dbReference type="InterPro" id="IPR005848">
    <property type="entry name" value="Urease_asu"/>
</dbReference>
<dbReference type="InterPro" id="IPR017951">
    <property type="entry name" value="Urease_asu_c"/>
</dbReference>
<dbReference type="InterPro" id="IPR029754">
    <property type="entry name" value="Urease_Ni-bd"/>
</dbReference>
<dbReference type="NCBIfam" id="NF009686">
    <property type="entry name" value="PRK13207.1"/>
    <property type="match status" value="1"/>
</dbReference>
<dbReference type="NCBIfam" id="NF009834">
    <property type="entry name" value="PRK13309.1"/>
    <property type="match status" value="1"/>
</dbReference>
<dbReference type="NCBIfam" id="TIGR01792">
    <property type="entry name" value="urease_alph"/>
    <property type="match status" value="1"/>
</dbReference>
<dbReference type="PANTHER" id="PTHR43440">
    <property type="entry name" value="UREASE"/>
    <property type="match status" value="1"/>
</dbReference>
<dbReference type="PANTHER" id="PTHR43440:SF1">
    <property type="entry name" value="UREASE"/>
    <property type="match status" value="1"/>
</dbReference>
<dbReference type="Pfam" id="PF01979">
    <property type="entry name" value="Amidohydro_1"/>
    <property type="match status" value="1"/>
</dbReference>
<dbReference type="Pfam" id="PF00449">
    <property type="entry name" value="Urease_alpha"/>
    <property type="match status" value="1"/>
</dbReference>
<dbReference type="PRINTS" id="PR01752">
    <property type="entry name" value="UREASE"/>
</dbReference>
<dbReference type="SUPFAM" id="SSF51338">
    <property type="entry name" value="Composite domain of metallo-dependent hydrolases"/>
    <property type="match status" value="2"/>
</dbReference>
<dbReference type="SUPFAM" id="SSF51556">
    <property type="entry name" value="Metallo-dependent hydrolases"/>
    <property type="match status" value="1"/>
</dbReference>
<dbReference type="PROSITE" id="PS01120">
    <property type="entry name" value="UREASE_1"/>
    <property type="match status" value="1"/>
</dbReference>
<dbReference type="PROSITE" id="PS00145">
    <property type="entry name" value="UREASE_2"/>
    <property type="match status" value="1"/>
</dbReference>
<dbReference type="PROSITE" id="PS51368">
    <property type="entry name" value="UREASE_3"/>
    <property type="match status" value="1"/>
</dbReference>
<keyword id="KW-0963">Cytoplasm</keyword>
<keyword id="KW-0378">Hydrolase</keyword>
<keyword id="KW-0479">Metal-binding</keyword>
<keyword id="KW-0533">Nickel</keyword>
<keyword id="KW-1185">Reference proteome</keyword>
<comment type="catalytic activity">
    <reaction evidence="1">
        <text>urea + 2 H2O + H(+) = hydrogencarbonate + 2 NH4(+)</text>
        <dbReference type="Rhea" id="RHEA:20557"/>
        <dbReference type="ChEBI" id="CHEBI:15377"/>
        <dbReference type="ChEBI" id="CHEBI:15378"/>
        <dbReference type="ChEBI" id="CHEBI:16199"/>
        <dbReference type="ChEBI" id="CHEBI:17544"/>
        <dbReference type="ChEBI" id="CHEBI:28938"/>
        <dbReference type="EC" id="3.5.1.5"/>
    </reaction>
</comment>
<comment type="cofactor">
    <cofactor evidence="1">
        <name>Ni cation</name>
        <dbReference type="ChEBI" id="CHEBI:25516"/>
    </cofactor>
    <text evidence="1">Binds 2 nickel ions per subunit.</text>
</comment>
<comment type="pathway">
    <text evidence="1">Nitrogen metabolism; urea degradation; CO(2) and NH(3) from urea (urease route): step 1/1.</text>
</comment>
<comment type="subunit">
    <text evidence="1">Heterotrimer of UreA (gamma), UreB (beta) and UreC (alpha) subunits. Three heterotrimers associate to form the active enzyme.</text>
</comment>
<comment type="subcellular location">
    <subcellularLocation>
        <location evidence="1">Cytoplasm</location>
    </subcellularLocation>
</comment>
<comment type="PTM">
    <text evidence="1">Carboxylation allows a single lysine to coordinate two nickel ions.</text>
</comment>
<comment type="similarity">
    <text evidence="1">Belongs to the metallo-dependent hydrolases superfamily. Urease alpha subunit family.</text>
</comment>
<reference key="1">
    <citation type="journal article" date="2009" name="PLoS Genet.">
        <title>The complete genome and proteome of Laribacter hongkongensis reveal potential mechanisms for adaptations to different temperatures and habitats.</title>
        <authorList>
            <person name="Woo P.C.Y."/>
            <person name="Lau S.K.P."/>
            <person name="Tse H."/>
            <person name="Teng J.L.L."/>
            <person name="Curreem S.O."/>
            <person name="Tsang A.K.L."/>
            <person name="Fan R.Y.Y."/>
            <person name="Wong G.K.M."/>
            <person name="Huang Y."/>
            <person name="Loman N.J."/>
            <person name="Snyder L.A.S."/>
            <person name="Cai J.J."/>
            <person name="Huang J.-D."/>
            <person name="Mak W."/>
            <person name="Pallen M.J."/>
            <person name="Lok S."/>
            <person name="Yuen K.-Y."/>
        </authorList>
    </citation>
    <scope>NUCLEOTIDE SEQUENCE [LARGE SCALE GENOMIC DNA]</scope>
    <source>
        <strain>HLHK9</strain>
    </source>
</reference>
<protein>
    <recommendedName>
        <fullName evidence="1">Urease subunit alpha</fullName>
        <ecNumber evidence="1">3.5.1.5</ecNumber>
    </recommendedName>
    <alternativeName>
        <fullName evidence="1">Urea amidohydrolase subunit alpha</fullName>
    </alternativeName>
</protein>
<accession>C1D5Z8</accession>
<feature type="chain" id="PRO_1000188880" description="Urease subunit alpha">
    <location>
        <begin position="1"/>
        <end position="572"/>
    </location>
</feature>
<feature type="domain" description="Urease" evidence="1">
    <location>
        <begin position="134"/>
        <end position="572"/>
    </location>
</feature>
<feature type="active site" description="Proton donor" evidence="1">
    <location>
        <position position="325"/>
    </location>
</feature>
<feature type="binding site" evidence="1">
    <location>
        <position position="139"/>
    </location>
    <ligand>
        <name>Ni(2+)</name>
        <dbReference type="ChEBI" id="CHEBI:49786"/>
        <label>1</label>
    </ligand>
</feature>
<feature type="binding site" evidence="1">
    <location>
        <position position="141"/>
    </location>
    <ligand>
        <name>Ni(2+)</name>
        <dbReference type="ChEBI" id="CHEBI:49786"/>
        <label>1</label>
    </ligand>
</feature>
<feature type="binding site" description="via carbamate group" evidence="1">
    <location>
        <position position="222"/>
    </location>
    <ligand>
        <name>Ni(2+)</name>
        <dbReference type="ChEBI" id="CHEBI:49786"/>
        <label>1</label>
    </ligand>
</feature>
<feature type="binding site" description="via carbamate group" evidence="1">
    <location>
        <position position="222"/>
    </location>
    <ligand>
        <name>Ni(2+)</name>
        <dbReference type="ChEBI" id="CHEBI:49786"/>
        <label>2</label>
    </ligand>
</feature>
<feature type="binding site" evidence="1">
    <location>
        <position position="224"/>
    </location>
    <ligand>
        <name>substrate</name>
    </ligand>
</feature>
<feature type="binding site" evidence="1">
    <location>
        <position position="251"/>
    </location>
    <ligand>
        <name>Ni(2+)</name>
        <dbReference type="ChEBI" id="CHEBI:49786"/>
        <label>2</label>
    </ligand>
</feature>
<feature type="binding site" evidence="1">
    <location>
        <position position="277"/>
    </location>
    <ligand>
        <name>Ni(2+)</name>
        <dbReference type="ChEBI" id="CHEBI:49786"/>
        <label>2</label>
    </ligand>
</feature>
<feature type="binding site" evidence="1">
    <location>
        <position position="365"/>
    </location>
    <ligand>
        <name>Ni(2+)</name>
        <dbReference type="ChEBI" id="CHEBI:49786"/>
        <label>1</label>
    </ligand>
</feature>
<feature type="modified residue" description="N6-carboxylysine" evidence="1">
    <location>
        <position position="222"/>
    </location>
</feature>
<gene>
    <name evidence="1" type="primary">ureC</name>
    <name type="ordered locus">LHK_01037</name>
</gene>
<organism>
    <name type="scientific">Laribacter hongkongensis (strain HLHK9)</name>
    <dbReference type="NCBI Taxonomy" id="557598"/>
    <lineage>
        <taxon>Bacteria</taxon>
        <taxon>Pseudomonadati</taxon>
        <taxon>Pseudomonadota</taxon>
        <taxon>Betaproteobacteria</taxon>
        <taxon>Neisseriales</taxon>
        <taxon>Aquaspirillaceae</taxon>
        <taxon>Laribacter</taxon>
    </lineage>
</organism>